<organismHost>
    <name type="scientific">Homo sapiens</name>
    <name type="common">Human</name>
    <dbReference type="NCBI Taxonomy" id="9606"/>
</organismHost>
<keyword id="KW-0024">Alternative initiation</keyword>
<keyword id="KW-1035">Host cytoplasm</keyword>
<keyword id="KW-1037">Host cytoskeleton</keyword>
<accession>P0DXO3</accession>
<proteinExistence type="evidence at protein level"/>
<name>ORF1_ZIKVK</name>
<protein>
    <recommendedName>
        <fullName>uORF1 protein</fullName>
    </recommendedName>
</protein>
<comment type="function">
    <text evidence="1">Plays a role in the reorganization of host microtubules and intermediate filaments to form a cytoskeletal cage that surrounds the viral factories, protecting the site of viral replication. May play a role in viral infection of human cortical neurons.</text>
</comment>
<comment type="subcellular location">
    <subcellularLocation>
        <location evidence="1">Host cytoplasm</location>
    </subcellularLocation>
    <subcellularLocation>
        <location evidence="1">Host cytoplasm</location>
        <location evidence="1">Host cytoskeleton</location>
    </subcellularLocation>
</comment>
<comment type="alternative products">
    <event type="alternative initiation"/>
    <isoform>
        <id>P0DXO3-1</id>
        <name evidence="1">uORF1 protein</name>
        <sequence type="displayed"/>
    </isoform>
    <isoform>
        <id>P0DXO1-1</id>
        <name evidence="1">uORF2 protein</name>
        <sequence type="external"/>
    </isoform>
    <isoform>
        <id>A0A142I5B9-1</id>
        <name>Genome polyprotein</name>
        <sequence type="external"/>
    </isoform>
</comment>
<comment type="miscellaneous">
    <text evidence="1">Product of an upstream open reading frame of the genome polyprotein gene.</text>
</comment>
<comment type="miscellaneous">
    <text evidence="1">The initiator methionine is coded by an unusual start codon CTG.</text>
</comment>
<comment type="miscellaneous">
    <text evidence="2">Belongs to the Zika virus American lineage encoding for a two uORF.</text>
</comment>
<reference key="1">
    <citation type="journal article" date="2012" name="PLoS Negl. Trop. Dis.">
        <title>Genetic characterization of zika virus strains: geographic expansion of the asian lineage.</title>
        <authorList>
            <person name="Haddow A.D."/>
            <person name="Schuh A.J."/>
            <person name="Yasuda C.Y."/>
            <person name="Kasper M.R."/>
            <person name="Heang V."/>
            <person name="Huy R."/>
            <person name="Guzman H."/>
            <person name="Tesh R.B."/>
            <person name="Weaver S.C."/>
        </authorList>
    </citation>
    <scope>NUCLEOTIDE SEQUENCE [GENOMIC DNA]</scope>
</reference>
<reference key="2">
    <citation type="journal article" date="2016" name="Genome Announc.">
        <title>Complete Genome Sequences of Five Zika Virus Isolates.</title>
        <authorList>
            <person name="Ladner J.T."/>
            <person name="Wiley M.R."/>
            <person name="Prieto K."/>
            <person name="Yasuda C.Y."/>
            <person name="Nagle E."/>
            <person name="Kasper M.R."/>
            <person name="Reyes D."/>
            <person name="Vasilakis N."/>
            <person name="Heang V."/>
            <person name="Weaver S.C."/>
            <person name="Haddow A."/>
            <person name="Tesh R.B."/>
            <person name="Sovann L."/>
            <person name="Palacios G."/>
        </authorList>
    </citation>
    <scope>NUCLEOTIDE SEQUENCE [LARGE SCALE GENOMIC DNA]</scope>
</reference>
<reference key="3">
    <citation type="journal article" date="2024" name="Nat. Commun.">
        <title>Zika viruses encode 5' upstream open reading frames affecting infection of human brain cells.</title>
        <authorList>
            <person name="Lefevre C."/>
            <person name="Cook G.M."/>
            <person name="Dinan A.M."/>
            <person name="Torii S."/>
            <person name="Stewart H."/>
            <person name="Gibbons G."/>
            <person name="Nicholson A.S."/>
            <person name="Echavarria-Consuegra L."/>
            <person name="Meredith L.W."/>
            <person name="Lulla V."/>
            <person name="McGovern N."/>
            <person name="Kenyon J.C."/>
            <person name="Goodfellow I."/>
            <person name="Deane J.E."/>
            <person name="Graham S.C."/>
            <person name="Lakatos A."/>
            <person name="Lambrechts L."/>
            <person name="Brierley I."/>
            <person name="Irigoyen N."/>
        </authorList>
    </citation>
    <scope>ALTERNATIVE INITIATION (ISOFORM UROF1 AND UORF2)</scope>
    <scope>FUNCTION</scope>
    <scope>SUBCELLULAR LOCATION</scope>
    <scope>MUTAGENESIS OF ILE-14</scope>
    <source>
        <strain>Isolate PE243</strain>
    </source>
</reference>
<evidence type="ECO:0000269" key="1">
    <source>
    </source>
</evidence>
<evidence type="ECO:0000305" key="2"/>
<dbReference type="EMBL" id="KU955593">
    <property type="status" value="NOT_ANNOTATED_CDS"/>
    <property type="molecule type" value="Genomic_RNA"/>
</dbReference>
<dbReference type="EMBL" id="JN860885">
    <property type="status" value="NOT_ANNOTATED_CDS"/>
    <property type="molecule type" value="Genomic_RNA"/>
</dbReference>
<dbReference type="Proteomes" id="UP000157401">
    <property type="component" value="Genome"/>
</dbReference>
<dbReference type="GO" id="GO:0030430">
    <property type="term" value="C:host cell cytoplasm"/>
    <property type="evidence" value="ECO:0007669"/>
    <property type="project" value="UniProtKB-SubCell"/>
</dbReference>
<dbReference type="GO" id="GO:0044163">
    <property type="term" value="C:host cytoskeleton"/>
    <property type="evidence" value="ECO:0007669"/>
    <property type="project" value="UniProtKB-SubCell"/>
</dbReference>
<sequence>MRQFEFEAKASNSINRFYFGFGNESFWS</sequence>
<organism>
    <name type="scientific">Zika virus (isolate ZIKV/Human/Cambodia/FSS13025/2010)</name>
    <name type="common">ZIKV</name>
    <dbReference type="NCBI Taxonomy" id="2316109"/>
    <lineage>
        <taxon>Viruses</taxon>
        <taxon>Riboviria</taxon>
        <taxon>Orthornavirae</taxon>
        <taxon>Kitrinoviricota</taxon>
        <taxon>Flasuviricetes</taxon>
        <taxon>Amarillovirales</taxon>
        <taxon>Flaviviridae</taxon>
        <taxon>Orthoflavivirus</taxon>
        <taxon>Orthoflavivirus zikaense</taxon>
    </lineage>
</organism>
<feature type="chain" id="PRO_0000461829" description="uORF1 protein">
    <location>
        <begin position="1"/>
        <end position="28"/>
    </location>
</feature>
<feature type="mutagenesis site" description="Complete loss of granular structures in the cytoplasm." evidence="1">
    <original>I</original>
    <variation>P</variation>
    <location>
        <position position="14"/>
    </location>
</feature>